<protein>
    <recommendedName>
        <fullName evidence="14">Cytosolic carboxypeptidase 1</fullName>
        <ecNumber evidence="7 9 11">3.4.17.-</ecNumber>
        <ecNumber evidence="7">3.4.17.24</ecNumber>
    </recommendedName>
    <alternativeName>
        <fullName evidence="2">ATP/GTP-binding protein 1</fullName>
    </alternativeName>
    <alternativeName>
        <fullName evidence="2">Nervous system nuclear protein induced by axotomy protein 1 homolog</fullName>
    </alternativeName>
    <alternativeName>
        <fullName evidence="15">Protein deglutamylase CCP1</fullName>
    </alternativeName>
</protein>
<organism>
    <name type="scientific">Homo sapiens</name>
    <name type="common">Human</name>
    <dbReference type="NCBI Taxonomy" id="9606"/>
    <lineage>
        <taxon>Eukaryota</taxon>
        <taxon>Metazoa</taxon>
        <taxon>Chordata</taxon>
        <taxon>Craniata</taxon>
        <taxon>Vertebrata</taxon>
        <taxon>Euteleostomi</taxon>
        <taxon>Mammalia</taxon>
        <taxon>Eutheria</taxon>
        <taxon>Euarchontoglires</taxon>
        <taxon>Primates</taxon>
        <taxon>Haplorrhini</taxon>
        <taxon>Catarrhini</taxon>
        <taxon>Hominidae</taxon>
        <taxon>Homo</taxon>
    </lineage>
</organism>
<dbReference type="EC" id="3.4.17.-" evidence="7 9 11"/>
<dbReference type="EC" id="3.4.17.24" evidence="7"/>
<dbReference type="EMBL" id="AB028958">
    <property type="protein sequence ID" value="BAA82987.2"/>
    <property type="status" value="ALT_FRAME"/>
    <property type="molecule type" value="mRNA"/>
</dbReference>
<dbReference type="EMBL" id="AK001544">
    <property type="protein sequence ID" value="BAA91749.1"/>
    <property type="molecule type" value="mRNA"/>
</dbReference>
<dbReference type="EMBL" id="AK022562">
    <property type="protein sequence ID" value="BAB14100.1"/>
    <property type="status" value="ALT_INIT"/>
    <property type="molecule type" value="mRNA"/>
</dbReference>
<dbReference type="EMBL" id="AK023280">
    <property type="protein sequence ID" value="BAB14505.1"/>
    <property type="status" value="ALT_INIT"/>
    <property type="molecule type" value="mRNA"/>
</dbReference>
<dbReference type="EMBL" id="AK295774">
    <property type="protein sequence ID" value="BAG58598.1"/>
    <property type="molecule type" value="mRNA"/>
</dbReference>
<dbReference type="EMBL" id="AK299506">
    <property type="protein sequence ID" value="BAG61460.1"/>
    <property type="status" value="ALT_INIT"/>
    <property type="molecule type" value="mRNA"/>
</dbReference>
<dbReference type="EMBL" id="AL157882">
    <property type="status" value="NOT_ANNOTATED_CDS"/>
    <property type="molecule type" value="Genomic_DNA"/>
</dbReference>
<dbReference type="EMBL" id="AL451131">
    <property type="status" value="NOT_ANNOTATED_CDS"/>
    <property type="molecule type" value="Genomic_DNA"/>
</dbReference>
<dbReference type="EMBL" id="CH471089">
    <property type="protein sequence ID" value="EAW62694.1"/>
    <property type="molecule type" value="Genomic_DNA"/>
</dbReference>
<dbReference type="EMBL" id="CH471089">
    <property type="protein sequence ID" value="EAW62698.1"/>
    <property type="molecule type" value="Genomic_DNA"/>
</dbReference>
<dbReference type="EMBL" id="CH471089">
    <property type="protein sequence ID" value="EAW62697.1"/>
    <property type="status" value="ALT_SEQ"/>
    <property type="molecule type" value="Genomic_DNA"/>
</dbReference>
<dbReference type="EMBL" id="BC060815">
    <property type="protein sequence ID" value="AAH60815.1"/>
    <property type="molecule type" value="mRNA"/>
</dbReference>
<dbReference type="EMBL" id="BX648366">
    <property type="protein sequence ID" value="CAH56158.1"/>
    <property type="molecule type" value="mRNA"/>
</dbReference>
<dbReference type="EMBL" id="AL833359">
    <property type="protein sequence ID" value="CAH56222.1"/>
    <property type="status" value="ALT_INIT"/>
    <property type="molecule type" value="mRNA"/>
</dbReference>
<dbReference type="CCDS" id="CCDS6672.1">
    <molecule id="Q9UPW5-2"/>
</dbReference>
<dbReference type="CCDS" id="CCDS69615.1">
    <molecule id="Q9UPW5-3"/>
</dbReference>
<dbReference type="CCDS" id="CCDS83382.1">
    <molecule id="Q9UPW5-1"/>
</dbReference>
<dbReference type="RefSeq" id="NP_001273644.1">
    <property type="nucleotide sequence ID" value="NM_001286715.1"/>
</dbReference>
<dbReference type="RefSeq" id="NP_001273646.1">
    <molecule id="Q9UPW5-3"/>
    <property type="nucleotide sequence ID" value="NM_001286717.1"/>
</dbReference>
<dbReference type="RefSeq" id="NP_001317630.1">
    <molecule id="Q9UPW5-1"/>
    <property type="nucleotide sequence ID" value="NM_001330701.2"/>
</dbReference>
<dbReference type="RefSeq" id="NP_056054.2">
    <molecule id="Q9UPW5-2"/>
    <property type="nucleotide sequence ID" value="NM_015239.3"/>
</dbReference>
<dbReference type="RefSeq" id="XP_005251905.1">
    <molecule id="Q9UPW5-1"/>
    <property type="nucleotide sequence ID" value="XM_005251848.3"/>
</dbReference>
<dbReference type="RefSeq" id="XP_016870033.1">
    <property type="nucleotide sequence ID" value="XM_017014544.1"/>
</dbReference>
<dbReference type="RefSeq" id="XP_016870035.1">
    <property type="nucleotide sequence ID" value="XM_017014546.1"/>
</dbReference>
<dbReference type="RefSeq" id="XP_047279042.1">
    <molecule id="Q9UPW5-1"/>
    <property type="nucleotide sequence ID" value="XM_047423086.1"/>
</dbReference>
<dbReference type="RefSeq" id="XP_047279043.1">
    <molecule id="Q9UPW5-1"/>
    <property type="nucleotide sequence ID" value="XM_047423087.1"/>
</dbReference>
<dbReference type="RefSeq" id="XP_047279044.1">
    <molecule id="Q9UPW5-1"/>
    <property type="nucleotide sequence ID" value="XM_047423088.1"/>
</dbReference>
<dbReference type="RefSeq" id="XP_047279045.1">
    <molecule id="Q9UPW5-1"/>
    <property type="nucleotide sequence ID" value="XM_047423089.1"/>
</dbReference>
<dbReference type="RefSeq" id="XP_047279046.1">
    <molecule id="Q9UPW5-1"/>
    <property type="nucleotide sequence ID" value="XM_047423090.1"/>
</dbReference>
<dbReference type="RefSeq" id="XP_047279047.1">
    <molecule id="Q9UPW5-1"/>
    <property type="nucleotide sequence ID" value="XM_047423091.1"/>
</dbReference>
<dbReference type="RefSeq" id="XP_047279048.1">
    <molecule id="Q9UPW5-1"/>
    <property type="nucleotide sequence ID" value="XM_047423092.1"/>
</dbReference>
<dbReference type="RefSeq" id="XP_047279049.1">
    <molecule id="Q9UPW5-1"/>
    <property type="nucleotide sequence ID" value="XM_047423093.1"/>
</dbReference>
<dbReference type="RefSeq" id="XP_047279050.1">
    <molecule id="Q9UPW5-1"/>
    <property type="nucleotide sequence ID" value="XM_047423094.1"/>
</dbReference>
<dbReference type="RefSeq" id="XP_047279051.1">
    <molecule id="Q9UPW5-1"/>
    <property type="nucleotide sequence ID" value="XM_047423095.1"/>
</dbReference>
<dbReference type="RefSeq" id="XP_047279052.1">
    <molecule id="Q9UPW5-2"/>
    <property type="nucleotide sequence ID" value="XM_047423096.1"/>
</dbReference>
<dbReference type="RefSeq" id="XP_047279053.1">
    <molecule id="Q9UPW5-2"/>
    <property type="nucleotide sequence ID" value="XM_047423097.1"/>
</dbReference>
<dbReference type="RefSeq" id="XP_054218489.1">
    <molecule id="Q9UPW5-1"/>
    <property type="nucleotide sequence ID" value="XM_054362514.1"/>
</dbReference>
<dbReference type="RefSeq" id="XP_054218490.1">
    <molecule id="Q9UPW5-1"/>
    <property type="nucleotide sequence ID" value="XM_054362515.1"/>
</dbReference>
<dbReference type="RefSeq" id="XP_054218491.1">
    <molecule id="Q9UPW5-1"/>
    <property type="nucleotide sequence ID" value="XM_054362516.1"/>
</dbReference>
<dbReference type="RefSeq" id="XP_054218492.1">
    <molecule id="Q9UPW5-1"/>
    <property type="nucleotide sequence ID" value="XM_054362517.1"/>
</dbReference>
<dbReference type="RefSeq" id="XP_054218493.1">
    <molecule id="Q9UPW5-1"/>
    <property type="nucleotide sequence ID" value="XM_054362518.1"/>
</dbReference>
<dbReference type="RefSeq" id="XP_054218494.1">
    <molecule id="Q9UPW5-1"/>
    <property type="nucleotide sequence ID" value="XM_054362519.1"/>
</dbReference>
<dbReference type="RefSeq" id="XP_054218495.1">
    <molecule id="Q9UPW5-1"/>
    <property type="nucleotide sequence ID" value="XM_054362520.1"/>
</dbReference>
<dbReference type="RefSeq" id="XP_054218496.1">
    <molecule id="Q9UPW5-1"/>
    <property type="nucleotide sequence ID" value="XM_054362521.1"/>
</dbReference>
<dbReference type="RefSeq" id="XP_054218497.1">
    <molecule id="Q9UPW5-1"/>
    <property type="nucleotide sequence ID" value="XM_054362522.1"/>
</dbReference>
<dbReference type="RefSeq" id="XP_054218498.1">
    <molecule id="Q9UPW5-1"/>
    <property type="nucleotide sequence ID" value="XM_054362523.1"/>
</dbReference>
<dbReference type="RefSeq" id="XP_054218499.1">
    <molecule id="Q9UPW5-2"/>
    <property type="nucleotide sequence ID" value="XM_054362524.1"/>
</dbReference>
<dbReference type="RefSeq" id="XP_054218500.1">
    <molecule id="Q9UPW5-2"/>
    <property type="nucleotide sequence ID" value="XM_054362525.1"/>
</dbReference>
<dbReference type="SMR" id="Q9UPW5"/>
<dbReference type="BioGRID" id="116885">
    <property type="interactions" value="66"/>
</dbReference>
<dbReference type="FunCoup" id="Q9UPW5">
    <property type="interactions" value="2900"/>
</dbReference>
<dbReference type="IntAct" id="Q9UPW5">
    <property type="interactions" value="36"/>
</dbReference>
<dbReference type="MINT" id="Q9UPW5"/>
<dbReference type="STRING" id="9606.ENSP00000338512"/>
<dbReference type="ChEMBL" id="CHEMBL4523495"/>
<dbReference type="MEROPS" id="M14.028"/>
<dbReference type="GlyGen" id="Q9UPW5">
    <property type="glycosylation" value="1 site, 1 N-linked glycan (1 site)"/>
</dbReference>
<dbReference type="iPTMnet" id="Q9UPW5"/>
<dbReference type="PhosphoSitePlus" id="Q9UPW5"/>
<dbReference type="BioMuta" id="AGTPBP1"/>
<dbReference type="DMDM" id="160019039"/>
<dbReference type="jPOST" id="Q9UPW5"/>
<dbReference type="MassIVE" id="Q9UPW5"/>
<dbReference type="PaxDb" id="9606-ENSP00000338512"/>
<dbReference type="PeptideAtlas" id="Q9UPW5"/>
<dbReference type="ProteomicsDB" id="85460">
    <molecule id="Q9UPW5-1"/>
</dbReference>
<dbReference type="ProteomicsDB" id="85461">
    <molecule id="Q9UPW5-2"/>
</dbReference>
<dbReference type="ProteomicsDB" id="85462">
    <molecule id="Q9UPW5-3"/>
</dbReference>
<dbReference type="Pumba" id="Q9UPW5"/>
<dbReference type="Antibodypedia" id="27717">
    <property type="antibodies" value="352 antibodies from 30 providers"/>
</dbReference>
<dbReference type="DNASU" id="23287"/>
<dbReference type="Ensembl" id="ENST00000357081.8">
    <molecule id="Q9UPW5-1"/>
    <property type="protein sequence ID" value="ENSP00000349592.3"/>
    <property type="gene ID" value="ENSG00000135049.16"/>
</dbReference>
<dbReference type="Ensembl" id="ENST00000376083.7">
    <molecule id="Q9UPW5-2"/>
    <property type="protein sequence ID" value="ENSP00000365251.3"/>
    <property type="gene ID" value="ENSG00000135049.16"/>
</dbReference>
<dbReference type="Ensembl" id="ENST00000628899.1">
    <molecule id="Q9UPW5-3"/>
    <property type="protein sequence ID" value="ENSP00000487074.1"/>
    <property type="gene ID" value="ENSG00000135049.16"/>
</dbReference>
<dbReference type="GeneID" id="23287"/>
<dbReference type="KEGG" id="hsa:23287"/>
<dbReference type="MANE-Select" id="ENST00000357081.8">
    <property type="protein sequence ID" value="ENSP00000349592.3"/>
    <property type="RefSeq nucleotide sequence ID" value="NM_001330701.2"/>
    <property type="RefSeq protein sequence ID" value="NP_001317630.1"/>
</dbReference>
<dbReference type="UCSC" id="uc010mqc.4">
    <molecule id="Q9UPW5-1"/>
    <property type="organism name" value="human"/>
</dbReference>
<dbReference type="AGR" id="HGNC:17258"/>
<dbReference type="CTD" id="23287"/>
<dbReference type="DisGeNET" id="23287"/>
<dbReference type="GeneCards" id="AGTPBP1"/>
<dbReference type="HGNC" id="HGNC:17258">
    <property type="gene designation" value="AGTPBP1"/>
</dbReference>
<dbReference type="HPA" id="ENSG00000135049">
    <property type="expression patterns" value="Tissue enhanced (bone marrow, retina)"/>
</dbReference>
<dbReference type="MalaCards" id="AGTPBP1"/>
<dbReference type="MIM" id="606830">
    <property type="type" value="gene"/>
</dbReference>
<dbReference type="MIM" id="618276">
    <property type="type" value="phenotype"/>
</dbReference>
<dbReference type="neXtProt" id="NX_Q9UPW5"/>
<dbReference type="OpenTargets" id="ENSG00000135049"/>
<dbReference type="Orphanet" id="2254">
    <property type="disease" value="Pontocerebellar hypoplasia type 1"/>
</dbReference>
<dbReference type="PharmGKB" id="PA24630"/>
<dbReference type="VEuPathDB" id="HostDB:ENSG00000135049"/>
<dbReference type="eggNOG" id="KOG3641">
    <property type="taxonomic scope" value="Eukaryota"/>
</dbReference>
<dbReference type="GeneTree" id="ENSGT00940000157707"/>
<dbReference type="HOGENOM" id="CLU_007391_0_0_1"/>
<dbReference type="InParanoid" id="Q9UPW5"/>
<dbReference type="OMA" id="LEYNMPS"/>
<dbReference type="OrthoDB" id="10253041at2759"/>
<dbReference type="PAN-GO" id="Q9UPW5">
    <property type="GO annotations" value="2 GO annotations based on evolutionary models"/>
</dbReference>
<dbReference type="PhylomeDB" id="Q9UPW5"/>
<dbReference type="TreeFam" id="TF313794"/>
<dbReference type="BRENDA" id="3.4.17.24">
    <property type="organism ID" value="2681"/>
</dbReference>
<dbReference type="PathwayCommons" id="Q9UPW5"/>
<dbReference type="Reactome" id="R-HSA-8955332">
    <property type="pathway name" value="Carboxyterminal post-translational modifications of tubulin"/>
</dbReference>
<dbReference type="SignaLink" id="Q9UPW5"/>
<dbReference type="BioGRID-ORCS" id="23287">
    <property type="hits" value="11 hits in 1155 CRISPR screens"/>
</dbReference>
<dbReference type="ChiTaRS" id="AGTPBP1">
    <property type="organism name" value="human"/>
</dbReference>
<dbReference type="GenomeRNAi" id="23287"/>
<dbReference type="Pharos" id="Q9UPW5">
    <property type="development level" value="Tbio"/>
</dbReference>
<dbReference type="PRO" id="PR:Q9UPW5"/>
<dbReference type="Proteomes" id="UP000005640">
    <property type="component" value="Chromosome 9"/>
</dbReference>
<dbReference type="RNAct" id="Q9UPW5">
    <property type="molecule type" value="protein"/>
</dbReference>
<dbReference type="Bgee" id="ENSG00000135049">
    <property type="expression patterns" value="Expressed in cortical plate and 199 other cell types or tissues"/>
</dbReference>
<dbReference type="ExpressionAtlas" id="Q9UPW5">
    <property type="expression patterns" value="baseline and differential"/>
</dbReference>
<dbReference type="GO" id="GO:1904115">
    <property type="term" value="C:axon cytoplasm"/>
    <property type="evidence" value="ECO:0007669"/>
    <property type="project" value="GOC"/>
</dbReference>
<dbReference type="GO" id="GO:0034451">
    <property type="term" value="C:centriolar satellite"/>
    <property type="evidence" value="ECO:0000314"/>
    <property type="project" value="HPA"/>
</dbReference>
<dbReference type="GO" id="GO:0036064">
    <property type="term" value="C:ciliary basal body"/>
    <property type="evidence" value="ECO:0000314"/>
    <property type="project" value="HPA"/>
</dbReference>
<dbReference type="GO" id="GO:0005929">
    <property type="term" value="C:cilium"/>
    <property type="evidence" value="ECO:0000314"/>
    <property type="project" value="HPA"/>
</dbReference>
<dbReference type="GO" id="GO:0005737">
    <property type="term" value="C:cytoplasm"/>
    <property type="evidence" value="ECO:0000314"/>
    <property type="project" value="UniProtKB"/>
</dbReference>
<dbReference type="GO" id="GO:0005829">
    <property type="term" value="C:cytosol"/>
    <property type="evidence" value="ECO:0000250"/>
    <property type="project" value="UniProtKB"/>
</dbReference>
<dbReference type="GO" id="GO:0015630">
    <property type="term" value="C:microtubule cytoskeleton"/>
    <property type="evidence" value="ECO:0000318"/>
    <property type="project" value="GO_Central"/>
</dbReference>
<dbReference type="GO" id="GO:0005739">
    <property type="term" value="C:mitochondrion"/>
    <property type="evidence" value="ECO:0000250"/>
    <property type="project" value="UniProtKB"/>
</dbReference>
<dbReference type="GO" id="GO:0005654">
    <property type="term" value="C:nucleoplasm"/>
    <property type="evidence" value="ECO:0000314"/>
    <property type="project" value="HPA"/>
</dbReference>
<dbReference type="GO" id="GO:0005634">
    <property type="term" value="C:nucleus"/>
    <property type="evidence" value="ECO:0000314"/>
    <property type="project" value="UniProtKB"/>
</dbReference>
<dbReference type="GO" id="GO:0005886">
    <property type="term" value="C:plasma membrane"/>
    <property type="evidence" value="ECO:0000314"/>
    <property type="project" value="HPA"/>
</dbReference>
<dbReference type="GO" id="GO:0004181">
    <property type="term" value="F:metallocarboxypeptidase activity"/>
    <property type="evidence" value="ECO:0000314"/>
    <property type="project" value="UniProtKB"/>
</dbReference>
<dbReference type="GO" id="GO:0015631">
    <property type="term" value="F:tubulin binding"/>
    <property type="evidence" value="ECO:0000250"/>
    <property type="project" value="UniProtKB"/>
</dbReference>
<dbReference type="GO" id="GO:0008270">
    <property type="term" value="F:zinc ion binding"/>
    <property type="evidence" value="ECO:0007669"/>
    <property type="project" value="InterPro"/>
</dbReference>
<dbReference type="GO" id="GO:0007628">
    <property type="term" value="P:adult walking behavior"/>
    <property type="evidence" value="ECO:0007669"/>
    <property type="project" value="Ensembl"/>
</dbReference>
<dbReference type="GO" id="GO:0098957">
    <property type="term" value="P:anterograde axonal transport of mitochondrion"/>
    <property type="evidence" value="ECO:0007669"/>
    <property type="project" value="Ensembl"/>
</dbReference>
<dbReference type="GO" id="GO:0035609">
    <property type="term" value="P:C-terminal protein deglutamylation"/>
    <property type="evidence" value="ECO:0000314"/>
    <property type="project" value="UniProtKB"/>
</dbReference>
<dbReference type="GO" id="GO:0021954">
    <property type="term" value="P:central nervous system neuron development"/>
    <property type="evidence" value="ECO:0007669"/>
    <property type="project" value="Ensembl"/>
</dbReference>
<dbReference type="GO" id="GO:0021702">
    <property type="term" value="P:cerebellar Purkinje cell differentiation"/>
    <property type="evidence" value="ECO:0000250"/>
    <property type="project" value="UniProtKB"/>
</dbReference>
<dbReference type="GO" id="GO:0001754">
    <property type="term" value="P:eye photoreceptor cell differentiation"/>
    <property type="evidence" value="ECO:0000250"/>
    <property type="project" value="UniProtKB"/>
</dbReference>
<dbReference type="GO" id="GO:0007005">
    <property type="term" value="P:mitochondrion organization"/>
    <property type="evidence" value="ECO:0000250"/>
    <property type="project" value="UniProtKB"/>
</dbReference>
<dbReference type="GO" id="GO:0008285">
    <property type="term" value="P:negative regulation of cell population proliferation"/>
    <property type="evidence" value="ECO:0007669"/>
    <property type="project" value="Ensembl"/>
</dbReference>
<dbReference type="GO" id="GO:0050905">
    <property type="term" value="P:neuromuscular process"/>
    <property type="evidence" value="ECO:0000250"/>
    <property type="project" value="UniProtKB"/>
</dbReference>
<dbReference type="GO" id="GO:0021772">
    <property type="term" value="P:olfactory bulb development"/>
    <property type="evidence" value="ECO:0000250"/>
    <property type="project" value="UniProtKB"/>
</dbReference>
<dbReference type="GO" id="GO:2000060">
    <property type="term" value="P:positive regulation of ubiquitin-dependent protein catabolic process"/>
    <property type="evidence" value="ECO:0007669"/>
    <property type="project" value="Ensembl"/>
</dbReference>
<dbReference type="GO" id="GO:0035608">
    <property type="term" value="P:protein deglutamylation"/>
    <property type="evidence" value="ECO:0000315"/>
    <property type="project" value="UniProtKB"/>
</dbReference>
<dbReference type="GO" id="GO:0035610">
    <property type="term" value="P:protein side chain deglutamylation"/>
    <property type="evidence" value="ECO:0000314"/>
    <property type="project" value="UniProtKB"/>
</dbReference>
<dbReference type="GO" id="GO:0006508">
    <property type="term" value="P:proteolysis"/>
    <property type="evidence" value="ECO:0007669"/>
    <property type="project" value="UniProtKB-KW"/>
</dbReference>
<dbReference type="GO" id="GO:0060041">
    <property type="term" value="P:retina development in camera-type eye"/>
    <property type="evidence" value="ECO:0007669"/>
    <property type="project" value="Ensembl"/>
</dbReference>
<dbReference type="GO" id="GO:0098958">
    <property type="term" value="P:retrograde axonal transport of mitochondrion"/>
    <property type="evidence" value="ECO:0007669"/>
    <property type="project" value="Ensembl"/>
</dbReference>
<dbReference type="CDD" id="cd06906">
    <property type="entry name" value="M14_Nna1"/>
    <property type="match status" value="1"/>
</dbReference>
<dbReference type="FunFam" id="3.40.630.10:FF:000024">
    <property type="entry name" value="ATP/GTP binding protein 1"/>
    <property type="match status" value="1"/>
</dbReference>
<dbReference type="FunFam" id="1.25.10.10:FF:000125">
    <property type="entry name" value="cytosolic carboxypeptidase 1 isoform X1"/>
    <property type="match status" value="1"/>
</dbReference>
<dbReference type="FunFam" id="2.60.40.3120:FF:000001">
    <property type="entry name" value="cytosolic carboxypeptidase 1 isoform X1"/>
    <property type="match status" value="1"/>
</dbReference>
<dbReference type="Gene3D" id="2.60.40.3120">
    <property type="match status" value="1"/>
</dbReference>
<dbReference type="Gene3D" id="1.25.10.10">
    <property type="entry name" value="Leucine-rich Repeat Variant"/>
    <property type="match status" value="1"/>
</dbReference>
<dbReference type="Gene3D" id="3.40.630.10">
    <property type="entry name" value="Zn peptidases"/>
    <property type="match status" value="1"/>
</dbReference>
<dbReference type="InterPro" id="IPR011989">
    <property type="entry name" value="ARM-like"/>
</dbReference>
<dbReference type="InterPro" id="IPR016024">
    <property type="entry name" value="ARM-type_fold"/>
</dbReference>
<dbReference type="InterPro" id="IPR033852">
    <property type="entry name" value="CBPC1/4"/>
</dbReference>
<dbReference type="InterPro" id="IPR050821">
    <property type="entry name" value="Cytosolic_carboxypeptidase"/>
</dbReference>
<dbReference type="InterPro" id="IPR040626">
    <property type="entry name" value="Pepdidase_M14_N"/>
</dbReference>
<dbReference type="InterPro" id="IPR000834">
    <property type="entry name" value="Peptidase_M14"/>
</dbReference>
<dbReference type="PANTHER" id="PTHR12756">
    <property type="entry name" value="CYTOSOLIC CARBOXYPEPTIDASE"/>
    <property type="match status" value="1"/>
</dbReference>
<dbReference type="PANTHER" id="PTHR12756:SF24">
    <property type="entry name" value="CYTOSOLIC CARBOXYPEPTIDASE 1"/>
    <property type="match status" value="1"/>
</dbReference>
<dbReference type="Pfam" id="PF18027">
    <property type="entry name" value="Pepdidase_M14_N"/>
    <property type="match status" value="1"/>
</dbReference>
<dbReference type="Pfam" id="PF00246">
    <property type="entry name" value="Peptidase_M14"/>
    <property type="match status" value="1"/>
</dbReference>
<dbReference type="SUPFAM" id="SSF48371">
    <property type="entry name" value="ARM repeat"/>
    <property type="match status" value="1"/>
</dbReference>
<dbReference type="SUPFAM" id="SSF53187">
    <property type="entry name" value="Zn-dependent exopeptidases"/>
    <property type="match status" value="1"/>
</dbReference>
<dbReference type="PROSITE" id="PS52035">
    <property type="entry name" value="PEPTIDASE_M14"/>
    <property type="match status" value="1"/>
</dbReference>
<reference key="1">
    <citation type="journal article" date="1999" name="DNA Res.">
        <title>Prediction of the coding sequences of unidentified human genes. XIV. The complete sequences of 100 new cDNA clones from brain which code for large proteins in vitro.</title>
        <authorList>
            <person name="Kikuno R."/>
            <person name="Nagase T."/>
            <person name="Ishikawa K."/>
            <person name="Hirosawa M."/>
            <person name="Miyajima N."/>
            <person name="Tanaka A."/>
            <person name="Kotani H."/>
            <person name="Nomura N."/>
            <person name="Ohara O."/>
        </authorList>
    </citation>
    <scope>NUCLEOTIDE SEQUENCE [LARGE SCALE MRNA] (ISOFORM 1)</scope>
    <source>
        <tissue>Brain</tissue>
    </source>
</reference>
<reference key="2">
    <citation type="journal article" date="2002" name="DNA Res.">
        <title>Construction of expression-ready cDNA clones for KIAA genes: manual curation of 330 KIAA cDNA clones.</title>
        <authorList>
            <person name="Nakajima D."/>
            <person name="Okazaki N."/>
            <person name="Yamakawa H."/>
            <person name="Kikuno R."/>
            <person name="Ohara O."/>
            <person name="Nagase T."/>
        </authorList>
    </citation>
    <scope>SEQUENCE REVISION</scope>
</reference>
<reference key="3">
    <citation type="journal article" date="2004" name="Nat. Genet.">
        <title>Complete sequencing and characterization of 21,243 full-length human cDNAs.</title>
        <authorList>
            <person name="Ota T."/>
            <person name="Suzuki Y."/>
            <person name="Nishikawa T."/>
            <person name="Otsuki T."/>
            <person name="Sugiyama T."/>
            <person name="Irie R."/>
            <person name="Wakamatsu A."/>
            <person name="Hayashi K."/>
            <person name="Sato H."/>
            <person name="Nagai K."/>
            <person name="Kimura K."/>
            <person name="Makita H."/>
            <person name="Sekine M."/>
            <person name="Obayashi M."/>
            <person name="Nishi T."/>
            <person name="Shibahara T."/>
            <person name="Tanaka T."/>
            <person name="Ishii S."/>
            <person name="Yamamoto J."/>
            <person name="Saito K."/>
            <person name="Kawai Y."/>
            <person name="Isono Y."/>
            <person name="Nakamura Y."/>
            <person name="Nagahari K."/>
            <person name="Murakami K."/>
            <person name="Yasuda T."/>
            <person name="Iwayanagi T."/>
            <person name="Wagatsuma M."/>
            <person name="Shiratori A."/>
            <person name="Sudo H."/>
            <person name="Hosoiri T."/>
            <person name="Kaku Y."/>
            <person name="Kodaira H."/>
            <person name="Kondo H."/>
            <person name="Sugawara M."/>
            <person name="Takahashi M."/>
            <person name="Kanda K."/>
            <person name="Yokoi T."/>
            <person name="Furuya T."/>
            <person name="Kikkawa E."/>
            <person name="Omura Y."/>
            <person name="Abe K."/>
            <person name="Kamihara K."/>
            <person name="Katsuta N."/>
            <person name="Sato K."/>
            <person name="Tanikawa M."/>
            <person name="Yamazaki M."/>
            <person name="Ninomiya K."/>
            <person name="Ishibashi T."/>
            <person name="Yamashita H."/>
            <person name="Murakawa K."/>
            <person name="Fujimori K."/>
            <person name="Tanai H."/>
            <person name="Kimata M."/>
            <person name="Watanabe M."/>
            <person name="Hiraoka S."/>
            <person name="Chiba Y."/>
            <person name="Ishida S."/>
            <person name="Ono Y."/>
            <person name="Takiguchi S."/>
            <person name="Watanabe S."/>
            <person name="Yosida M."/>
            <person name="Hotuta T."/>
            <person name="Kusano J."/>
            <person name="Kanehori K."/>
            <person name="Takahashi-Fujii A."/>
            <person name="Hara H."/>
            <person name="Tanase T.-O."/>
            <person name="Nomura Y."/>
            <person name="Togiya S."/>
            <person name="Komai F."/>
            <person name="Hara R."/>
            <person name="Takeuchi K."/>
            <person name="Arita M."/>
            <person name="Imose N."/>
            <person name="Musashino K."/>
            <person name="Yuuki H."/>
            <person name="Oshima A."/>
            <person name="Sasaki N."/>
            <person name="Aotsuka S."/>
            <person name="Yoshikawa Y."/>
            <person name="Matsunawa H."/>
            <person name="Ichihara T."/>
            <person name="Shiohata N."/>
            <person name="Sano S."/>
            <person name="Moriya S."/>
            <person name="Momiyama H."/>
            <person name="Satoh N."/>
            <person name="Takami S."/>
            <person name="Terashima Y."/>
            <person name="Suzuki O."/>
            <person name="Nakagawa S."/>
            <person name="Senoh A."/>
            <person name="Mizoguchi H."/>
            <person name="Goto Y."/>
            <person name="Shimizu F."/>
            <person name="Wakebe H."/>
            <person name="Hishigaki H."/>
            <person name="Watanabe T."/>
            <person name="Sugiyama A."/>
            <person name="Takemoto M."/>
            <person name="Kawakami B."/>
            <person name="Yamazaki M."/>
            <person name="Watanabe K."/>
            <person name="Kumagai A."/>
            <person name="Itakura S."/>
            <person name="Fukuzumi Y."/>
            <person name="Fujimori Y."/>
            <person name="Komiyama M."/>
            <person name="Tashiro H."/>
            <person name="Tanigami A."/>
            <person name="Fujiwara T."/>
            <person name="Ono T."/>
            <person name="Yamada K."/>
            <person name="Fujii Y."/>
            <person name="Ozaki K."/>
            <person name="Hirao M."/>
            <person name="Ohmori Y."/>
            <person name="Kawabata A."/>
            <person name="Hikiji T."/>
            <person name="Kobatake N."/>
            <person name="Inagaki H."/>
            <person name="Ikema Y."/>
            <person name="Okamoto S."/>
            <person name="Okitani R."/>
            <person name="Kawakami T."/>
            <person name="Noguchi S."/>
            <person name="Itoh T."/>
            <person name="Shigeta K."/>
            <person name="Senba T."/>
            <person name="Matsumura K."/>
            <person name="Nakajima Y."/>
            <person name="Mizuno T."/>
            <person name="Morinaga M."/>
            <person name="Sasaki M."/>
            <person name="Togashi T."/>
            <person name="Oyama M."/>
            <person name="Hata H."/>
            <person name="Watanabe M."/>
            <person name="Komatsu T."/>
            <person name="Mizushima-Sugano J."/>
            <person name="Satoh T."/>
            <person name="Shirai Y."/>
            <person name="Takahashi Y."/>
            <person name="Nakagawa K."/>
            <person name="Okumura K."/>
            <person name="Nagase T."/>
            <person name="Nomura N."/>
            <person name="Kikuchi H."/>
            <person name="Masuho Y."/>
            <person name="Yamashita R."/>
            <person name="Nakai K."/>
            <person name="Yada T."/>
            <person name="Nakamura Y."/>
            <person name="Ohara O."/>
            <person name="Isogai T."/>
            <person name="Sugano S."/>
        </authorList>
    </citation>
    <scope>NUCLEOTIDE SEQUENCE [LARGE SCALE MRNA] (ISOFORMS 2 AND 3)</scope>
    <source>
        <tissue>Brain</tissue>
        <tissue>Hippocampus</tissue>
    </source>
</reference>
<reference key="4">
    <citation type="journal article" date="2004" name="Nature">
        <title>DNA sequence and analysis of human chromosome 9.</title>
        <authorList>
            <person name="Humphray S.J."/>
            <person name="Oliver K."/>
            <person name="Hunt A.R."/>
            <person name="Plumb R.W."/>
            <person name="Loveland J.E."/>
            <person name="Howe K.L."/>
            <person name="Andrews T.D."/>
            <person name="Searle S."/>
            <person name="Hunt S.E."/>
            <person name="Scott C.E."/>
            <person name="Jones M.C."/>
            <person name="Ainscough R."/>
            <person name="Almeida J.P."/>
            <person name="Ambrose K.D."/>
            <person name="Ashwell R.I.S."/>
            <person name="Babbage A.K."/>
            <person name="Babbage S."/>
            <person name="Bagguley C.L."/>
            <person name="Bailey J."/>
            <person name="Banerjee R."/>
            <person name="Barker D.J."/>
            <person name="Barlow K.F."/>
            <person name="Bates K."/>
            <person name="Beasley H."/>
            <person name="Beasley O."/>
            <person name="Bird C.P."/>
            <person name="Bray-Allen S."/>
            <person name="Brown A.J."/>
            <person name="Brown J.Y."/>
            <person name="Burford D."/>
            <person name="Burrill W."/>
            <person name="Burton J."/>
            <person name="Carder C."/>
            <person name="Carter N.P."/>
            <person name="Chapman J.C."/>
            <person name="Chen Y."/>
            <person name="Clarke G."/>
            <person name="Clark S.Y."/>
            <person name="Clee C.M."/>
            <person name="Clegg S."/>
            <person name="Collier R.E."/>
            <person name="Corby N."/>
            <person name="Crosier M."/>
            <person name="Cummings A.T."/>
            <person name="Davies J."/>
            <person name="Dhami P."/>
            <person name="Dunn M."/>
            <person name="Dutta I."/>
            <person name="Dyer L.W."/>
            <person name="Earthrowl M.E."/>
            <person name="Faulkner L."/>
            <person name="Fleming C.J."/>
            <person name="Frankish A."/>
            <person name="Frankland J.A."/>
            <person name="French L."/>
            <person name="Fricker D.G."/>
            <person name="Garner P."/>
            <person name="Garnett J."/>
            <person name="Ghori J."/>
            <person name="Gilbert J.G.R."/>
            <person name="Glison C."/>
            <person name="Grafham D.V."/>
            <person name="Gribble S."/>
            <person name="Griffiths C."/>
            <person name="Griffiths-Jones S."/>
            <person name="Grocock R."/>
            <person name="Guy J."/>
            <person name="Hall R.E."/>
            <person name="Hammond S."/>
            <person name="Harley J.L."/>
            <person name="Harrison E.S.I."/>
            <person name="Hart E.A."/>
            <person name="Heath P.D."/>
            <person name="Henderson C.D."/>
            <person name="Hopkins B.L."/>
            <person name="Howard P.J."/>
            <person name="Howden P.J."/>
            <person name="Huckle E."/>
            <person name="Johnson C."/>
            <person name="Johnson D."/>
            <person name="Joy A.A."/>
            <person name="Kay M."/>
            <person name="Keenan S."/>
            <person name="Kershaw J.K."/>
            <person name="Kimberley A.M."/>
            <person name="King A."/>
            <person name="Knights A."/>
            <person name="Laird G.K."/>
            <person name="Langford C."/>
            <person name="Lawlor S."/>
            <person name="Leongamornlert D.A."/>
            <person name="Leversha M."/>
            <person name="Lloyd C."/>
            <person name="Lloyd D.M."/>
            <person name="Lovell J."/>
            <person name="Martin S."/>
            <person name="Mashreghi-Mohammadi M."/>
            <person name="Matthews L."/>
            <person name="McLaren S."/>
            <person name="McLay K.E."/>
            <person name="McMurray A."/>
            <person name="Milne S."/>
            <person name="Nickerson T."/>
            <person name="Nisbett J."/>
            <person name="Nordsiek G."/>
            <person name="Pearce A.V."/>
            <person name="Peck A.I."/>
            <person name="Porter K.M."/>
            <person name="Pandian R."/>
            <person name="Pelan S."/>
            <person name="Phillimore B."/>
            <person name="Povey S."/>
            <person name="Ramsey Y."/>
            <person name="Rand V."/>
            <person name="Scharfe M."/>
            <person name="Sehra H.K."/>
            <person name="Shownkeen R."/>
            <person name="Sims S.K."/>
            <person name="Skuce C.D."/>
            <person name="Smith M."/>
            <person name="Steward C.A."/>
            <person name="Swarbreck D."/>
            <person name="Sycamore N."/>
            <person name="Tester J."/>
            <person name="Thorpe A."/>
            <person name="Tracey A."/>
            <person name="Tromans A."/>
            <person name="Thomas D.W."/>
            <person name="Wall M."/>
            <person name="Wallis J.M."/>
            <person name="West A.P."/>
            <person name="Whitehead S.L."/>
            <person name="Willey D.L."/>
            <person name="Williams S.A."/>
            <person name="Wilming L."/>
            <person name="Wray P.W."/>
            <person name="Young L."/>
            <person name="Ashurst J.L."/>
            <person name="Coulson A."/>
            <person name="Blocker H."/>
            <person name="Durbin R.M."/>
            <person name="Sulston J.E."/>
            <person name="Hubbard T."/>
            <person name="Jackson M.J."/>
            <person name="Bentley D.R."/>
            <person name="Beck S."/>
            <person name="Rogers J."/>
            <person name="Dunham I."/>
        </authorList>
    </citation>
    <scope>NUCLEOTIDE SEQUENCE [LARGE SCALE GENOMIC DNA]</scope>
</reference>
<reference key="5">
    <citation type="submission" date="2005-07" db="EMBL/GenBank/DDBJ databases">
        <authorList>
            <person name="Mural R.J."/>
            <person name="Istrail S."/>
            <person name="Sutton G.G."/>
            <person name="Florea L."/>
            <person name="Halpern A.L."/>
            <person name="Mobarry C.M."/>
            <person name="Lippert R."/>
            <person name="Walenz B."/>
            <person name="Shatkay H."/>
            <person name="Dew I."/>
            <person name="Miller J.R."/>
            <person name="Flanigan M.J."/>
            <person name="Edwards N.J."/>
            <person name="Bolanos R."/>
            <person name="Fasulo D."/>
            <person name="Halldorsson B.V."/>
            <person name="Hannenhalli S."/>
            <person name="Turner R."/>
            <person name="Yooseph S."/>
            <person name="Lu F."/>
            <person name="Nusskern D.R."/>
            <person name="Shue B.C."/>
            <person name="Zheng X.H."/>
            <person name="Zhong F."/>
            <person name="Delcher A.L."/>
            <person name="Huson D.H."/>
            <person name="Kravitz S.A."/>
            <person name="Mouchard L."/>
            <person name="Reinert K."/>
            <person name="Remington K.A."/>
            <person name="Clark A.G."/>
            <person name="Waterman M.S."/>
            <person name="Eichler E.E."/>
            <person name="Adams M.D."/>
            <person name="Hunkapiller M.W."/>
            <person name="Myers E.W."/>
            <person name="Venter J.C."/>
        </authorList>
    </citation>
    <scope>NUCLEOTIDE SEQUENCE [LARGE SCALE GENOMIC DNA]</scope>
</reference>
<reference key="6">
    <citation type="journal article" date="2004" name="Genome Res.">
        <title>The status, quality, and expansion of the NIH full-length cDNA project: the Mammalian Gene Collection (MGC).</title>
        <authorList>
            <consortium name="The MGC Project Team"/>
        </authorList>
    </citation>
    <scope>NUCLEOTIDE SEQUENCE [LARGE SCALE MRNA] (ISOFORM 2)</scope>
    <source>
        <tissue>Placenta</tissue>
    </source>
</reference>
<reference key="7">
    <citation type="journal article" date="2007" name="BMC Genomics">
        <title>The full-ORF clone resource of the German cDNA consortium.</title>
        <authorList>
            <person name="Bechtel S."/>
            <person name="Rosenfelder H."/>
            <person name="Duda A."/>
            <person name="Schmidt C.P."/>
            <person name="Ernst U."/>
            <person name="Wellenreuther R."/>
            <person name="Mehrle A."/>
            <person name="Schuster C."/>
            <person name="Bahr A."/>
            <person name="Bloecker H."/>
            <person name="Heubner D."/>
            <person name="Hoerlein A."/>
            <person name="Michel G."/>
            <person name="Wedler H."/>
            <person name="Koehrer K."/>
            <person name="Ottenwaelder B."/>
            <person name="Poustka A."/>
            <person name="Wiemann S."/>
            <person name="Schupp I."/>
        </authorList>
    </citation>
    <scope>NUCLEOTIDE SEQUENCE [LARGE SCALE MRNA] OF 396-1226</scope>
    <source>
        <tissue>Esophageal carcinoma</tissue>
        <tissue>Lymph node</tissue>
    </source>
</reference>
<reference key="8">
    <citation type="journal article" date="2007" name="FASEB J.">
        <title>A novel subfamily of mouse cytosolic carboxypeptidases.</title>
        <authorList>
            <person name="Kalinina E."/>
            <person name="Biswas R."/>
            <person name="Berezniuk I."/>
            <person name="Hermoso A."/>
            <person name="Aviles F.X."/>
            <person name="Fricker L.D."/>
        </authorList>
    </citation>
    <scope>SUBCELLULAR LOCATION</scope>
</reference>
<reference key="9">
    <citation type="journal article" date="2008" name="Proc. Natl. Acad. Sci. U.S.A.">
        <title>A quantitative atlas of mitotic phosphorylation.</title>
        <authorList>
            <person name="Dephoure N."/>
            <person name="Zhou C."/>
            <person name="Villen J."/>
            <person name="Beausoleil S.A."/>
            <person name="Bakalarski C.E."/>
            <person name="Elledge S.J."/>
            <person name="Gygi S.P."/>
        </authorList>
    </citation>
    <scope>IDENTIFICATION BY MASS SPECTROMETRY [LARGE SCALE ANALYSIS]</scope>
    <source>
        <tissue>Cervix carcinoma</tissue>
    </source>
</reference>
<reference key="10">
    <citation type="journal article" date="2009" name="Anal. Chem.">
        <title>Lys-N and trypsin cover complementary parts of the phosphoproteome in a refined SCX-based approach.</title>
        <authorList>
            <person name="Gauci S."/>
            <person name="Helbig A.O."/>
            <person name="Slijper M."/>
            <person name="Krijgsveld J."/>
            <person name="Heck A.J."/>
            <person name="Mohammed S."/>
        </authorList>
    </citation>
    <scope>IDENTIFICATION BY MASS SPECTROMETRY [LARGE SCALE ANALYSIS]</scope>
</reference>
<reference key="11">
    <citation type="journal article" date="2009" name="Sci. Signal.">
        <title>Quantitative phosphoproteomic analysis of T cell receptor signaling reveals system-wide modulation of protein-protein interactions.</title>
        <authorList>
            <person name="Mayya V."/>
            <person name="Lundgren D.H."/>
            <person name="Hwang S.-I."/>
            <person name="Rezaul K."/>
            <person name="Wu L."/>
            <person name="Eng J.K."/>
            <person name="Rodionov V."/>
            <person name="Han D.K."/>
        </authorList>
    </citation>
    <scope>IDENTIFICATION BY MASS SPECTROMETRY [LARGE SCALE ANALYSIS]</scope>
    <source>
        <tissue>Leukemic T-cell</tissue>
    </source>
</reference>
<reference key="12">
    <citation type="journal article" date="2011" name="BMC Syst. Biol.">
        <title>Initial characterization of the human central proteome.</title>
        <authorList>
            <person name="Burkard T.R."/>
            <person name="Planyavsky M."/>
            <person name="Kaupe I."/>
            <person name="Breitwieser F.P."/>
            <person name="Buerckstuemmer T."/>
            <person name="Bennett K.L."/>
            <person name="Superti-Furga G."/>
            <person name="Colinge J."/>
        </authorList>
    </citation>
    <scope>IDENTIFICATION BY MASS SPECTROMETRY [LARGE SCALE ANALYSIS]</scope>
</reference>
<reference key="13">
    <citation type="journal article" date="2012" name="J. Biol. Chem.">
        <title>Cytosolic carboxypeptidase 1 is involved in processing alpha- and beta-tubulin.</title>
        <authorList>
            <person name="Berezniuk I."/>
            <person name="Vu H.T."/>
            <person name="Lyons P.J."/>
            <person name="Sironi J.J."/>
            <person name="Xiao H."/>
            <person name="Burd B."/>
            <person name="Setou M."/>
            <person name="Angeletti R.H."/>
            <person name="Ikegami K."/>
            <person name="Fricker L.D."/>
        </authorList>
    </citation>
    <scope>FUNCTION</scope>
    <scope>CATALYTIC ACTIVITY</scope>
</reference>
<reference key="14">
    <citation type="journal article" date="2013" name="J. Biol. Chem.">
        <title>Cytosolic carboxypeptidase 5 removes alpha- and gamma-linked glutamates from tubulin.</title>
        <authorList>
            <person name="Berezniuk I."/>
            <person name="Lyons P.J."/>
            <person name="Sironi J.J."/>
            <person name="Xiao H."/>
            <person name="Setou M."/>
            <person name="Angeletti R.H."/>
            <person name="Ikegami K."/>
            <person name="Fricker L.D."/>
        </authorList>
    </citation>
    <scope>FUNCTION</scope>
    <scope>CATALYTIC ACTIVITY</scope>
</reference>
<reference key="15">
    <citation type="journal article" date="2013" name="FASEB J.">
        <title>Functional segregation and emerging role of cilia-related cytosolic carboxypeptidases (CCPs).</title>
        <authorList>
            <person name="Rodriguez de la Vega Otazo M."/>
            <person name="Lorenzo J."/>
            <person name="Tort O."/>
            <person name="Aviles F.X."/>
            <person name="Bautista J.M."/>
        </authorList>
    </citation>
    <scope>SUBCELLULAR LOCATION</scope>
</reference>
<reference key="16">
    <citation type="journal article" date="2013" name="J. Proteome Res.">
        <title>Toward a comprehensive characterization of a human cancer cell phosphoproteome.</title>
        <authorList>
            <person name="Zhou H."/>
            <person name="Di Palma S."/>
            <person name="Preisinger C."/>
            <person name="Peng M."/>
            <person name="Polat A.N."/>
            <person name="Heck A.J."/>
            <person name="Mohammed S."/>
        </authorList>
    </citation>
    <scope>PHOSPHORYLATION [LARGE SCALE ANALYSIS] AT SER-1168</scope>
    <scope>IDENTIFICATION BY MASS SPECTROMETRY [LARGE SCALE ANALYSIS]</scope>
    <source>
        <tissue>Cervix carcinoma</tissue>
        <tissue>Erythroleukemia</tissue>
    </source>
</reference>
<reference key="17">
    <citation type="journal article" date="2018" name="Nat. Commun.">
        <title>Klf4 glutamylation is required for cell reprogramming and early embryonic development in mice.</title>
        <authorList>
            <person name="Ye B."/>
            <person name="Liu B."/>
            <person name="Hao L."/>
            <person name="Zhu X."/>
            <person name="Yang L."/>
            <person name="Wang S."/>
            <person name="Xia P."/>
            <person name="Du Y."/>
            <person name="Meng S."/>
            <person name="Huang G."/>
            <person name="Qin X."/>
            <person name="Wang Y."/>
            <person name="Yan X."/>
            <person name="Li C."/>
            <person name="Hao J."/>
            <person name="Zhu P."/>
            <person name="He L."/>
            <person name="Tian Y."/>
            <person name="Fan Z."/>
        </authorList>
    </citation>
    <scope>FUNCTION</scope>
</reference>
<reference key="18">
    <citation type="journal article" date="2006" name="Science">
        <title>The consensus coding sequences of human breast and colorectal cancers.</title>
        <authorList>
            <person name="Sjoeblom T."/>
            <person name="Jones S."/>
            <person name="Wood L.D."/>
            <person name="Parsons D.W."/>
            <person name="Lin J."/>
            <person name="Barber T.D."/>
            <person name="Mandelker D."/>
            <person name="Leary R.J."/>
            <person name="Ptak J."/>
            <person name="Silliman N."/>
            <person name="Szabo S."/>
            <person name="Buckhaults P."/>
            <person name="Farrell C."/>
            <person name="Meeh P."/>
            <person name="Markowitz S.D."/>
            <person name="Willis J."/>
            <person name="Dawson D."/>
            <person name="Willson J.K.V."/>
            <person name="Gazdar A.F."/>
            <person name="Hartigan J."/>
            <person name="Wu L."/>
            <person name="Liu C."/>
            <person name="Parmigiani G."/>
            <person name="Park B.H."/>
            <person name="Bachman K.E."/>
            <person name="Papadopoulos N."/>
            <person name="Vogelstein B."/>
            <person name="Kinzler K.W."/>
            <person name="Velculescu V.E."/>
        </authorList>
    </citation>
    <scope>VARIANT [LARGE SCALE ANALYSIS] LYS-423</scope>
</reference>
<reference key="19">
    <citation type="journal article" date="2018" name="EMBO J.">
        <title>Loss of tubulin deglutamylase CCP1 causes infantile-onset neurodegeneration.</title>
        <authorList>
            <consortium name="Undiagnosed Diseases Network"/>
            <person name="Shashi V."/>
            <person name="Magiera M.M."/>
            <person name="Klein D."/>
            <person name="Zaki M."/>
            <person name="Schoch K."/>
            <person name="Rudnik-Schoeneborn S."/>
            <person name="Norman A."/>
            <person name="Lopes Abath Neto O."/>
            <person name="Dusl M."/>
            <person name="Yuan X."/>
            <person name="Bartesaghi L."/>
            <person name="De Marco P."/>
            <person name="Alfares A.A."/>
            <person name="Marom R."/>
            <person name="Arold S.T."/>
            <person name="Guzman-Vega F.J."/>
            <person name="Pena L.D."/>
            <person name="Smith E.C."/>
            <person name="Steinlin M."/>
            <person name="Babiker M.O."/>
            <person name="Mohassel P."/>
            <person name="Foley A.R."/>
            <person name="Donkervoort S."/>
            <person name="Kaur R."/>
            <person name="Ghosh P.S."/>
            <person name="Stanley V."/>
            <person name="Musaev D."/>
            <person name="Nava C."/>
            <person name="Mignot C."/>
            <person name="Keren B."/>
            <person name="Scala M."/>
            <person name="Tassano E."/>
            <person name="Picco P."/>
            <person name="Doneda P."/>
            <person name="Fiorillo C."/>
            <person name="Issa M.Y."/>
            <person name="Alassiri A."/>
            <person name="Alahmad A."/>
            <person name="Gerard A."/>
            <person name="Liu P."/>
            <person name="Yang Y."/>
            <person name="Ertl-Wagner B."/>
            <person name="Kranz P.G."/>
            <person name="Wentzensen I.M."/>
            <person name="Stucka R."/>
            <person name="Stong N."/>
            <person name="Allen A.S."/>
            <person name="Goldstein D.B."/>
            <person name="Schoser B."/>
            <person name="Roesler K.M."/>
            <person name="Alfadhel M."/>
            <person name="Capra V."/>
            <person name="Chrast R."/>
            <person name="Strom T.M."/>
            <person name="Kamsteeg E.J."/>
            <person name="Boennemann C.G."/>
            <person name="Gleeson J.G."/>
            <person name="Martini R."/>
            <person name="Janke C."/>
            <person name="Senderek J."/>
        </authorList>
    </citation>
    <scope>VARIANTS CONDCA 330-ARG--PRO-1226 DEL; ASP-694; 788-GLN--PRO-1226 DEL; CYS-799; MET-851; 856-GLN--PRO-1226 DEL; CYS-910; TRP-918 AND LEU-990</scope>
    <scope>CHARACTERIZATION OF VARIANTS CONDCA ASP-694; MET-851; 856-GLN--PRO-1226 DEL; TRP-918 AND LEU-990</scope>
    <scope>INVOLVEMENT IN CONDCA</scope>
    <scope>FUNCTION</scope>
</reference>
<name>CBPC1_HUMAN</name>
<sequence>MSKLKVIPEKSLTNNSRIVGLLAQLEKINAEPSESDTARYVTSKILHLAQSQEKTRREMTAKGSTGMEILLSTLENTKDLQTTLNILSILVELVSAGGGRRVSFLVTKGGSQILLQLLMNASKESPPHEDLMVQIHSILAKIGPKDKKFGVKARINGALNITLNLVKQNLQNHRLVLPCLQLLRVYSANSVNSVSLGKNGVVELMFKIIGPFSKKNSSLIKVALDTLAALLKSKTNARRAVDRGYVQVLLTIYVDWHRHDNRHRNMLIRKGILQSLKSVTNIKLGRKAFIDANGMKILYNTSQECLAVRTLDPLVNTSSLIMRKCFPKNRLPLPTIKSSFHFQLPVIPVTGPVAQLYSLPPEVDDVVDESDDNDDIDVEAENETENEDDLDQNFKNDDIETDINKLKPQQEPGRTIEDLKMYEHLFPELVDDFQDYDLISKEPKPFVFEGKVRGPIVVPTAGEETSGNSGNLRKVVMKENISSKGDEGEKKSTFMDLAKEDIKDNDRTLQQQPGDQNRTISSVHGLNNDIVKALDRITLQNIPSQTAPGFTAEMKKDCSLPLTVLTCAKACPHMATCGNVLFEGRTVQLGKLCCTGVETEDDEDTESNSSVEQASVEVPDGPTLHDPDLYIEIVKNTKSVPEYSEVAYPDYFGHIPPPFKEPILERPYGVQRTKIAQDIERLIHQSDIIDRVVYDLDNPNYTIPEEGDILKFNSKFESGNLRKVIQIRKNEYDLILNSDINSNHYHQWFYFEVSGMRPGVAYRFNIINCEKSNSQFNYGMQPLMYSVQEALNARPWWIRMGTDICYYKNHFSRSSVAAGGQKGKSYYTITFTVNFPHKDDVCYFAYHYPYTYSTLQMHLQKLESAHNPQQIYFRKDVLCETLSGNSCPLVTITAMPESNYYEHICHFRNRPYVFLSARVHPGETNASWVMKGTLEYLMSNNPTAQSLRESYIFKIVPMLNPDGVINGNHRCSLSGEDLNRQWQSPSPDLHPTIYHAKGLLQYLAAVKRLPLVYCDYHGHSRKKNVFMYGCSIKETVWHTNDNATSCDVVEDTGYRTLPKILSHIAPAFCMSSCSFVVEKSKESTARVVVWREIGVQRSYTMESTLCGCDQGKYKGLQIGTRELEEMGAKFCVGLLRLKRLTSPLEYNLPSSLLDFENDLIESSCKVTSPTTYVLDEDEPRFLEEVDYSAESNDELDIELAENVGDYEPSAQEEVLSDSELSRTYLP</sequence>
<comment type="function">
    <text evidence="7 9 10 11">Metallocarboxypeptidase that mediates protein deglutamylation of tubulin and non-tubulin target proteins (PubMed:22170066, PubMed:24022482, PubMed:30420557). Catalyzes the removal of polyglutamate side chains present on the gamma-carboxyl group of glutamate residues within the C-terminal tail of alpha- and beta-tubulin (PubMed:22170066, PubMed:24022482, PubMed:30420557). Specifically cleaves tubulin long-side-chains, while it is not able to remove the branching point glutamate (PubMed:24022482). Also catalyzes the removal of polyglutamate residues from the carboxy-terminus of alpha-tubulin as well as non-tubulin proteins such as MYLK (PubMed:22170066). Involved in KLF4 deglutamylation which promotes KLF4 proteasome-mediated degradation, thereby negatively regulating cell pluripotency maintenance and embryogenesis (PubMed:29593216).</text>
</comment>
<comment type="catalytic activity">
    <reaction evidence="7 9 11">
        <text>(L-glutamyl)(n+1)-gamma-L-glutamyl-L-glutamyl-[protein] + H2O = (L-glutamyl)(n)-gamma-L-glutamyl-L-glutamyl-[protein] + L-glutamate</text>
        <dbReference type="Rhea" id="RHEA:60004"/>
        <dbReference type="Rhea" id="RHEA-COMP:15519"/>
        <dbReference type="Rhea" id="RHEA-COMP:15675"/>
        <dbReference type="ChEBI" id="CHEBI:15377"/>
        <dbReference type="ChEBI" id="CHEBI:29985"/>
        <dbReference type="ChEBI" id="CHEBI:143623"/>
    </reaction>
    <physiologicalReaction direction="left-to-right" evidence="16 17 18">
        <dbReference type="Rhea" id="RHEA:60005"/>
    </physiologicalReaction>
</comment>
<comment type="catalytic activity">
    <reaction evidence="7">
        <text>C-terminal L-alpha-aminoacyl-L-glutamyl-L-glutamyl-[tubulin] + H2O = C-terminal L-alpha-aminoacyl-L-glutamyl-[tubulin] + L-glutamate</text>
        <dbReference type="Rhea" id="RHEA:63792"/>
        <dbReference type="Rhea" id="RHEA-COMP:16435"/>
        <dbReference type="Rhea" id="RHEA-COMP:16436"/>
        <dbReference type="ChEBI" id="CHEBI:15377"/>
        <dbReference type="ChEBI" id="CHEBI:29985"/>
        <dbReference type="ChEBI" id="CHEBI:149555"/>
        <dbReference type="ChEBI" id="CHEBI:149556"/>
        <dbReference type="EC" id="3.4.17.24"/>
    </reaction>
    <physiologicalReaction direction="left-to-right" evidence="16">
        <dbReference type="Rhea" id="RHEA:63793"/>
    </physiologicalReaction>
</comment>
<comment type="cofactor">
    <cofactor evidence="1">
        <name>Zn(2+)</name>
        <dbReference type="ChEBI" id="CHEBI:29105"/>
    </cofactor>
    <text evidence="1">Binds 1 zinc ion per subunit.</text>
</comment>
<comment type="subunit">
    <text evidence="1">Interacts with MYLK.</text>
</comment>
<comment type="subcellular location">
    <subcellularLocation>
        <location evidence="6 8">Cytoplasm</location>
    </subcellularLocation>
    <subcellularLocation>
        <location evidence="2">Cytoplasm</location>
        <location evidence="2">Cytosol</location>
    </subcellularLocation>
    <subcellularLocation>
        <location evidence="8">Nucleus</location>
    </subcellularLocation>
    <subcellularLocation>
        <location evidence="2">Mitochondrion</location>
    </subcellularLocation>
    <text evidence="8">Localizes in both the cytoplasm and nuclei of interphase and dividing cells.</text>
</comment>
<comment type="alternative products">
    <event type="alternative splicing"/>
    <isoform>
        <id>Q9UPW5-1</id>
        <name>1</name>
        <sequence type="displayed"/>
    </isoform>
    <isoform>
        <id>Q9UPW5-2</id>
        <name>2</name>
        <sequence type="described" ref="VSP_029044"/>
    </isoform>
    <isoform>
        <id>Q9UPW5-3</id>
        <name>3</name>
        <sequence type="described" ref="VSP_040422 VSP_029044"/>
    </isoform>
</comment>
<comment type="disease" evidence="11">
    <disease id="DI-05457">
        <name>Neurodegeneration, childhood-onset, with cerebellar atrophy</name>
        <acronym>CONDCA</acronym>
        <description>An autosomal recessive disorder characterized by early onset of progressive neurodegeneration affecting the central and peripheral nervous systems. Clinical features include global developmental delay, impaired intellectual development, poor or absent speech, and motor abnormalities. Brain imaging shows cerebellar atrophy. Death in childhood may occur.</description>
        <dbReference type="MIM" id="618276"/>
    </disease>
    <text>The disease is caused by variants affecting the gene represented in this entry.</text>
</comment>
<comment type="similarity">
    <text evidence="15">Belongs to the peptidase M14 family.</text>
</comment>
<comment type="sequence caution" evidence="15">
    <conflict type="frameshift">
        <sequence resource="EMBL-CDS" id="BAA82987"/>
    </conflict>
</comment>
<comment type="sequence caution" evidence="15">
    <conflict type="erroneous initiation">
        <sequence resource="EMBL-CDS" id="BAB14100"/>
    </conflict>
    <text>Truncated N-terminus.</text>
</comment>
<comment type="sequence caution" evidence="15">
    <conflict type="erroneous initiation">
        <sequence resource="EMBL-CDS" id="BAB14505"/>
    </conflict>
    <text>Truncated N-terminus.</text>
</comment>
<comment type="sequence caution" evidence="15">
    <conflict type="erroneous initiation">
        <sequence resource="EMBL-CDS" id="BAG61460"/>
    </conflict>
    <text>Truncated N-terminus.</text>
</comment>
<comment type="sequence caution" evidence="15">
    <conflict type="erroneous initiation">
        <sequence resource="EMBL-CDS" id="CAH56222"/>
    </conflict>
    <text>Truncated N-terminus.</text>
</comment>
<comment type="sequence caution" evidence="15">
    <conflict type="erroneous gene model prediction">
        <sequence resource="EMBL-CDS" id="EAW62697"/>
    </conflict>
</comment>
<proteinExistence type="evidence at protein level"/>
<gene>
    <name evidence="19" type="primary">AGTPBP1</name>
    <name evidence="14" type="synonym">CCP1</name>
    <name type="synonym">KIAA1035</name>
    <name type="synonym">NNA1</name>
</gene>
<accession>Q9UPW5</accession>
<accession>B4DIT6</accession>
<accession>B4DRZ8</accession>
<accession>Q5VV80</accession>
<accession>Q63HM7</accession>
<accession>Q658P5</accession>
<accession>Q6P9D6</accession>
<accession>Q9H8U6</accession>
<accession>Q9H9W8</accession>
<accession>Q9NVK1</accession>
<evidence type="ECO:0000250" key="1"/>
<evidence type="ECO:0000250" key="2">
    <source>
        <dbReference type="UniProtKB" id="Q641K1"/>
    </source>
</evidence>
<evidence type="ECO:0000255" key="3">
    <source>
        <dbReference type="PROSITE-ProRule" id="PRU01379"/>
    </source>
</evidence>
<evidence type="ECO:0000256" key="4">
    <source>
        <dbReference type="SAM" id="MobiDB-lite"/>
    </source>
</evidence>
<evidence type="ECO:0000269" key="5">
    <source>
    </source>
</evidence>
<evidence type="ECO:0000269" key="6">
    <source>
    </source>
</evidence>
<evidence type="ECO:0000269" key="7">
    <source>
    </source>
</evidence>
<evidence type="ECO:0000269" key="8">
    <source>
    </source>
</evidence>
<evidence type="ECO:0000269" key="9">
    <source>
    </source>
</evidence>
<evidence type="ECO:0000269" key="10">
    <source>
    </source>
</evidence>
<evidence type="ECO:0000269" key="11">
    <source>
    </source>
</evidence>
<evidence type="ECO:0000303" key="12">
    <source>
    </source>
</evidence>
<evidence type="ECO:0000303" key="13">
    <source>
    </source>
</evidence>
<evidence type="ECO:0000303" key="14">
    <source>
    </source>
</evidence>
<evidence type="ECO:0000305" key="15"/>
<evidence type="ECO:0000305" key="16">
    <source>
    </source>
</evidence>
<evidence type="ECO:0000305" key="17">
    <source>
    </source>
</evidence>
<evidence type="ECO:0000305" key="18">
    <source>
    </source>
</evidence>
<evidence type="ECO:0000312" key="19">
    <source>
        <dbReference type="HGNC" id="HGNC:17258"/>
    </source>
</evidence>
<evidence type="ECO:0007744" key="20">
    <source>
    </source>
</evidence>
<keyword id="KW-0025">Alternative splicing</keyword>
<keyword id="KW-0121">Carboxypeptidase</keyword>
<keyword id="KW-0963">Cytoplasm</keyword>
<keyword id="KW-0225">Disease variant</keyword>
<keyword id="KW-0378">Hydrolase</keyword>
<keyword id="KW-0479">Metal-binding</keyword>
<keyword id="KW-0482">Metalloprotease</keyword>
<keyword id="KW-0496">Mitochondrion</keyword>
<keyword id="KW-0523">Neurodegeneration</keyword>
<keyword id="KW-0539">Nucleus</keyword>
<keyword id="KW-0597">Phosphoprotein</keyword>
<keyword id="KW-0645">Protease</keyword>
<keyword id="KW-1267">Proteomics identification</keyword>
<keyword id="KW-1185">Reference proteome</keyword>
<keyword id="KW-0862">Zinc</keyword>
<feature type="chain" id="PRO_0000308690" description="Cytosolic carboxypeptidase 1">
    <location>
        <begin position="1"/>
        <end position="1226"/>
    </location>
</feature>
<feature type="domain" description="Peptidase M14" evidence="3">
    <location>
        <begin position="848"/>
        <end position="1138"/>
    </location>
</feature>
<feature type="region of interest" description="Disordered" evidence="4">
    <location>
        <begin position="599"/>
        <end position="619"/>
    </location>
</feature>
<feature type="region of interest" description="Disordered" evidence="4">
    <location>
        <begin position="1206"/>
        <end position="1226"/>
    </location>
</feature>
<feature type="active site" description="Proton donor/acceptor" evidence="3">
    <location>
        <position position="1102"/>
    </location>
</feature>
<feature type="binding site" evidence="3">
    <location>
        <position position="920"/>
    </location>
    <ligand>
        <name>Zn(2+)</name>
        <dbReference type="ChEBI" id="CHEBI:29105"/>
        <note>catalytic</note>
    </ligand>
</feature>
<feature type="binding site" evidence="3">
    <location>
        <position position="923"/>
    </location>
    <ligand>
        <name>Zn(2+)</name>
        <dbReference type="ChEBI" id="CHEBI:29105"/>
        <note>catalytic</note>
    </ligand>
</feature>
<feature type="binding site" evidence="3">
    <location>
        <position position="1017"/>
    </location>
    <ligand>
        <name>Zn(2+)</name>
        <dbReference type="ChEBI" id="CHEBI:29105"/>
        <note>catalytic</note>
    </ligand>
</feature>
<feature type="modified residue" description="Phosphoserine" evidence="20">
    <location>
        <position position="1168"/>
    </location>
</feature>
<feature type="splice variant" id="VSP_040422" description="In isoform 3." evidence="12">
    <original>MSKLKVIPEKS</original>
    <variation>MRTGSAASSAAAAAAAAAASASPATGVCMKTPGGGRRGIRRDPGAEPGAAALRGPRQRPILSR</variation>
    <location>
        <begin position="1"/>
        <end position="11"/>
    </location>
</feature>
<feature type="splice variant" id="VSP_029044" description="In isoform 2 and isoform 3." evidence="12 13">
    <location>
        <begin position="304"/>
        <end position="343"/>
    </location>
</feature>
<feature type="sequence variant" id="VAR_081908" description="In CONDCA." evidence="11">
    <location>
        <begin position="330"/>
        <end position="1226"/>
    </location>
</feature>
<feature type="sequence variant" id="VAR_036884" description="In a colorectal cancer sample; somatic mutation." evidence="5">
    <original>E</original>
    <variation>K</variation>
    <location>
        <position position="423"/>
    </location>
</feature>
<feature type="sequence variant" id="VAR_081909" description="In CONDCA; decreased tubulin deglutamylation shown by in vitro functional expression of the homologous murine variant; dbSNP:rs1564071824." evidence="11">
    <original>Y</original>
    <variation>D</variation>
    <location>
        <position position="694"/>
    </location>
</feature>
<feature type="sequence variant" id="VAR_081910" description="In CONDCA." evidence="11">
    <location>
        <begin position="788"/>
        <end position="1226"/>
    </location>
</feature>
<feature type="sequence variant" id="VAR_081911" description="In CONDCA; uncertain significance; dbSNP:rs1829302172." evidence="11">
    <original>R</original>
    <variation>C</variation>
    <location>
        <position position="799"/>
    </location>
</feature>
<feature type="sequence variant" id="VAR_081912" description="In CONDCA; decreased tubulin deglutamylation asshown by in vitro functional expression of the homologous murine variant; dbSNP:rs760300826." evidence="11">
    <original>T</original>
    <variation>M</variation>
    <location>
        <position position="851"/>
    </location>
</feature>
<feature type="sequence variant" id="VAR_081913" description="In CONDCA; loss of tubulin deglutamylation; patient cells show lack of protein and excess of tubulin polyglutamylation." evidence="11">
    <location>
        <begin position="856"/>
        <end position="1226"/>
    </location>
</feature>
<feature type="sequence variant" id="VAR_081914" description="In CONDCA; uncertain significance." evidence="11">
    <original>R</original>
    <variation>C</variation>
    <location>
        <position position="910"/>
    </location>
</feature>
<feature type="sequence variant" id="VAR_081915" description="In CONDCA; decreased tubulin deglutamylation shown by in vitro functional expression of the homologous murine variant; dbSNP:rs1564035967." evidence="11">
    <original>R</original>
    <variation>W</variation>
    <location>
        <position position="918"/>
    </location>
</feature>
<feature type="sequence variant" id="VAR_081916" description="In CONDCA; decreased tubulin deglutamylation shown by in vitro functional expression of the homologous murine variant; dbSNP:rs1564034077." evidence="11">
    <original>H</original>
    <variation>L</variation>
    <location>
        <position position="990"/>
    </location>
</feature>
<feature type="sequence conflict" description="In Ref. 3; BAA91749." evidence="15" ref="3">
    <original>Q</original>
    <variation>R</variation>
    <location>
        <position position="274"/>
    </location>
</feature>
<feature type="sequence conflict" description="In Ref. 7; CAH56222." evidence="15" ref="7">
    <original>DI</original>
    <variation>KK</variation>
    <location>
        <begin position="398"/>
        <end position="399"/>
    </location>
</feature>
<feature type="sequence conflict" description="In Ref. 3; BAA91749." evidence="15" ref="3">
    <original>E</original>
    <variation>G</variation>
    <location>
        <position position="464"/>
    </location>
</feature>
<feature type="sequence conflict" description="In Ref. 3; BAB14505." evidence="15" ref="3">
    <original>M</original>
    <variation>V</variation>
    <location>
        <position position="495"/>
    </location>
</feature>
<feature type="sequence conflict" description="In Ref. 3; BAB14100." evidence="15" ref="3">
    <original>M</original>
    <variation>V</variation>
    <location>
        <position position="574"/>
    </location>
</feature>
<feature type="sequence conflict" description="In Ref. 3; BAA91749." evidence="15" ref="3">
    <original>E</original>
    <variation>G</variation>
    <location>
        <position position="598"/>
    </location>
</feature>
<feature type="sequence conflict" description="In Ref. 7; CAH56222." evidence="15" ref="7">
    <original>F</original>
    <variation>I</variation>
    <location>
        <position position="712"/>
    </location>
</feature>
<feature type="sequence conflict" description="In Ref. 3; BAB14100." evidence="15" ref="3">
    <original>M</original>
    <variation>T</variation>
    <location>
        <position position="756"/>
    </location>
</feature>
<feature type="sequence conflict" description="In Ref. 3; BAB14505." evidence="15" ref="3">
    <original>S</original>
    <variation>P</variation>
    <location>
        <position position="812"/>
    </location>
</feature>
<feature type="sequence conflict" description="In Ref. 7; CAH56158." evidence="15" ref="7">
    <original>T</original>
    <variation>A</variation>
    <location>
        <position position="830"/>
    </location>
</feature>
<feature type="sequence conflict" description="In Ref. 3; BAB14505." evidence="15" ref="3">
    <original>N</original>
    <variation>D</variation>
    <location>
        <position position="909"/>
    </location>
</feature>
<feature type="sequence conflict" description="In Ref. 3; BAG58598." evidence="15" ref="3">
    <original>G</original>
    <variation>R</variation>
    <location>
        <position position="975"/>
    </location>
</feature>
<feature type="sequence conflict" description="In Ref. 3; BAB14505." evidence="15" ref="3">
    <original>Y</original>
    <variation>F</variation>
    <location>
        <position position="1054"/>
    </location>
</feature>
<feature type="sequence conflict" description="In Ref. 7; CAH56158." evidence="15" ref="7">
    <original>L</original>
    <variation>P</variation>
    <location>
        <position position="1153"/>
    </location>
</feature>